<name>ATPL_MESH7</name>
<comment type="function">
    <text evidence="1">F(1)F(0) ATP synthase produces ATP from ADP in the presence of a proton or sodium gradient. F-type ATPases consist of two structural domains, F(1) containing the extramembraneous catalytic core and F(0) containing the membrane proton channel, linked together by a central stalk and a peripheral stalk. During catalysis, ATP synthesis in the catalytic domain of F(1) is coupled via a rotary mechanism of the central stalk subunits to proton translocation.</text>
</comment>
<comment type="function">
    <text evidence="1">Key component of the F(0) channel; it plays a direct role in translocation across the membrane. A homomeric c-ring of between 10-14 subunits forms the central stalk rotor element with the F(1) delta and epsilon subunits.</text>
</comment>
<comment type="subunit">
    <text evidence="1">F-type ATPases have 2 components, F(1) - the catalytic core - and F(0) - the membrane proton channel. F(1) has five subunits: alpha(3), beta(3), gamma(1), delta(1), epsilon(1). F(0) has three main subunits: a(1), b(2) and c(10-14). The alpha and beta chains form an alternating ring which encloses part of the gamma chain. F(1) is attached to F(0) by a central stalk formed by the gamma and epsilon chains, while a peripheral stalk is formed by the delta and b chains.</text>
</comment>
<comment type="subcellular location">
    <subcellularLocation>
        <location evidence="1">Cell membrane</location>
        <topology evidence="1">Multi-pass membrane protein</topology>
    </subcellularLocation>
</comment>
<comment type="similarity">
    <text evidence="1">Belongs to the ATPase C chain family.</text>
</comment>
<feature type="chain" id="PRO_0000365899" description="ATP synthase subunit c">
    <location>
        <begin position="1"/>
        <end position="101"/>
    </location>
</feature>
<feature type="transmembrane region" description="Helical" evidence="1">
    <location>
        <begin position="31"/>
        <end position="51"/>
    </location>
</feature>
<feature type="transmembrane region" description="Helical" evidence="1">
    <location>
        <begin position="81"/>
        <end position="101"/>
    </location>
</feature>
<feature type="site" description="Reversibly protonated during proton transport" evidence="1">
    <location>
        <position position="84"/>
    </location>
</feature>
<keyword id="KW-0066">ATP synthesis</keyword>
<keyword id="KW-1003">Cell membrane</keyword>
<keyword id="KW-0138">CF(0)</keyword>
<keyword id="KW-0375">Hydrogen ion transport</keyword>
<keyword id="KW-0406">Ion transport</keyword>
<keyword id="KW-0446">Lipid-binding</keyword>
<keyword id="KW-0472">Membrane</keyword>
<keyword id="KW-0812">Transmembrane</keyword>
<keyword id="KW-1133">Transmembrane helix</keyword>
<keyword id="KW-0813">Transport</keyword>
<accession>Q4A8W4</accession>
<gene>
    <name evidence="1" type="primary">atpE</name>
    <name type="ordered locus">MHP7448_0048</name>
</gene>
<dbReference type="EMBL" id="AE017244">
    <property type="protein sequence ID" value="AAZ53425.1"/>
    <property type="molecule type" value="Genomic_DNA"/>
</dbReference>
<dbReference type="RefSeq" id="WP_011289968.1">
    <property type="nucleotide sequence ID" value="NC_007332.1"/>
</dbReference>
<dbReference type="SMR" id="Q4A8W4"/>
<dbReference type="KEGG" id="mhp:MHP7448_0048"/>
<dbReference type="HOGENOM" id="CLU_148047_2_2_14"/>
<dbReference type="Proteomes" id="UP000000553">
    <property type="component" value="Chromosome"/>
</dbReference>
<dbReference type="GO" id="GO:0005886">
    <property type="term" value="C:plasma membrane"/>
    <property type="evidence" value="ECO:0007669"/>
    <property type="project" value="UniProtKB-SubCell"/>
</dbReference>
<dbReference type="GO" id="GO:0045259">
    <property type="term" value="C:proton-transporting ATP synthase complex"/>
    <property type="evidence" value="ECO:0007669"/>
    <property type="project" value="UniProtKB-KW"/>
</dbReference>
<dbReference type="GO" id="GO:0033177">
    <property type="term" value="C:proton-transporting two-sector ATPase complex, proton-transporting domain"/>
    <property type="evidence" value="ECO:0007669"/>
    <property type="project" value="InterPro"/>
</dbReference>
<dbReference type="GO" id="GO:0008289">
    <property type="term" value="F:lipid binding"/>
    <property type="evidence" value="ECO:0007669"/>
    <property type="project" value="UniProtKB-KW"/>
</dbReference>
<dbReference type="GO" id="GO:0046933">
    <property type="term" value="F:proton-transporting ATP synthase activity, rotational mechanism"/>
    <property type="evidence" value="ECO:0007669"/>
    <property type="project" value="UniProtKB-UniRule"/>
</dbReference>
<dbReference type="CDD" id="cd18184">
    <property type="entry name" value="ATP-synt_Fo_c_NaATPase"/>
    <property type="match status" value="1"/>
</dbReference>
<dbReference type="Gene3D" id="1.20.120.610">
    <property type="entry name" value="lithium bound rotor ring of v- atpase"/>
    <property type="match status" value="1"/>
</dbReference>
<dbReference type="HAMAP" id="MF_01396">
    <property type="entry name" value="ATP_synth_c_bact"/>
    <property type="match status" value="1"/>
</dbReference>
<dbReference type="InterPro" id="IPR005953">
    <property type="entry name" value="ATP_synth_csu_bac/chlpt"/>
</dbReference>
<dbReference type="InterPro" id="IPR000454">
    <property type="entry name" value="ATP_synth_F0_csu"/>
</dbReference>
<dbReference type="InterPro" id="IPR020537">
    <property type="entry name" value="ATP_synth_F0_csu_DDCD_BS"/>
</dbReference>
<dbReference type="InterPro" id="IPR002379">
    <property type="entry name" value="ATPase_proteolipid_c-like_dom"/>
</dbReference>
<dbReference type="InterPro" id="IPR035921">
    <property type="entry name" value="F/V-ATP_Csub_sf"/>
</dbReference>
<dbReference type="NCBIfam" id="TIGR01260">
    <property type="entry name" value="ATP_synt_c"/>
    <property type="match status" value="1"/>
</dbReference>
<dbReference type="NCBIfam" id="NF005521">
    <property type="entry name" value="PRK07159.1"/>
    <property type="match status" value="1"/>
</dbReference>
<dbReference type="PANTHER" id="PTHR10031">
    <property type="entry name" value="ATP SYNTHASE LIPID-BINDING PROTEIN, MITOCHONDRIAL"/>
    <property type="match status" value="1"/>
</dbReference>
<dbReference type="PANTHER" id="PTHR10031:SF0">
    <property type="entry name" value="ATPASE PROTEIN 9"/>
    <property type="match status" value="1"/>
</dbReference>
<dbReference type="Pfam" id="PF00137">
    <property type="entry name" value="ATP-synt_C"/>
    <property type="match status" value="1"/>
</dbReference>
<dbReference type="PRINTS" id="PR00124">
    <property type="entry name" value="ATPASEC"/>
</dbReference>
<dbReference type="SUPFAM" id="SSF81333">
    <property type="entry name" value="F1F0 ATP synthase subunit C"/>
    <property type="match status" value="1"/>
</dbReference>
<dbReference type="PROSITE" id="PS00605">
    <property type="entry name" value="ATPASE_C"/>
    <property type="match status" value="1"/>
</dbReference>
<protein>
    <recommendedName>
        <fullName evidence="1">ATP synthase subunit c</fullName>
    </recommendedName>
    <alternativeName>
        <fullName evidence="1">ATP synthase F(0) sector subunit c</fullName>
    </alternativeName>
    <alternativeName>
        <fullName evidence="1">F-type ATPase subunit c</fullName>
        <shortName evidence="1">F-ATPase subunit c</shortName>
    </alternativeName>
    <alternativeName>
        <fullName evidence="1">Lipid-binding protein</fullName>
    </alternativeName>
</protein>
<organism>
    <name type="scientific">Mesomycoplasma hyopneumoniae (strain 7448)</name>
    <name type="common">Mycoplasma hyopneumoniae</name>
    <dbReference type="NCBI Taxonomy" id="262722"/>
    <lineage>
        <taxon>Bacteria</taxon>
        <taxon>Bacillati</taxon>
        <taxon>Mycoplasmatota</taxon>
        <taxon>Mycoplasmoidales</taxon>
        <taxon>Metamycoplasmataceae</taxon>
        <taxon>Mesomycoplasma</taxon>
    </lineage>
</organism>
<proteinExistence type="inferred from homology"/>
<evidence type="ECO:0000255" key="1">
    <source>
        <dbReference type="HAMAP-Rule" id="MF_01396"/>
    </source>
</evidence>
<sequence length="101" mass="10522">MNSIVNFSQQLIQNFQEVSQKTVADSSNLKAFAYLGAGLAMIGVIGVGAGQGYAAGKACDAIARNPEAQKQVFRVLVIGTAISETSSIYALLVALILIFVG</sequence>
<reference key="1">
    <citation type="journal article" date="2005" name="J. Bacteriol.">
        <title>Swine and poultry pathogens: the complete genome sequences of two strains of Mycoplasma hyopneumoniae and a strain of Mycoplasma synoviae.</title>
        <authorList>
            <person name="Vasconcelos A.T.R."/>
            <person name="Ferreira H.B."/>
            <person name="Bizarro C.V."/>
            <person name="Bonatto S.L."/>
            <person name="Carvalho M.O."/>
            <person name="Pinto P.M."/>
            <person name="Almeida D.F."/>
            <person name="Almeida L.G.P."/>
            <person name="Almeida R."/>
            <person name="Alves-Junior L."/>
            <person name="Assuncao E.N."/>
            <person name="Azevedo V.A.C."/>
            <person name="Bogo M.R."/>
            <person name="Brigido M.M."/>
            <person name="Brocchi M."/>
            <person name="Burity H.A."/>
            <person name="Camargo A.A."/>
            <person name="Camargo S.S."/>
            <person name="Carepo M.S."/>
            <person name="Carraro D.M."/>
            <person name="de Mattos Cascardo J.C."/>
            <person name="Castro L.A."/>
            <person name="Cavalcanti G."/>
            <person name="Chemale G."/>
            <person name="Collevatti R.G."/>
            <person name="Cunha C.W."/>
            <person name="Dallagiovanna B."/>
            <person name="Dambros B.P."/>
            <person name="Dellagostin O.A."/>
            <person name="Falcao C."/>
            <person name="Fantinatti-Garboggini F."/>
            <person name="Felipe M.S.S."/>
            <person name="Fiorentin L."/>
            <person name="Franco G.R."/>
            <person name="Freitas N.S.A."/>
            <person name="Frias D."/>
            <person name="Grangeiro T.B."/>
            <person name="Grisard E.C."/>
            <person name="Guimaraes C.T."/>
            <person name="Hungria M."/>
            <person name="Jardim S.N."/>
            <person name="Krieger M.A."/>
            <person name="Laurino J.P."/>
            <person name="Lima L.F.A."/>
            <person name="Lopes M.I."/>
            <person name="Loreto E.L.S."/>
            <person name="Madeira H.M.F."/>
            <person name="Manfio G.P."/>
            <person name="Maranhao A.Q."/>
            <person name="Martinkovics C.T."/>
            <person name="Medeiros S.R.B."/>
            <person name="Moreira M.A.M."/>
            <person name="Neiva M."/>
            <person name="Ramalho-Neto C.E."/>
            <person name="Nicolas M.F."/>
            <person name="Oliveira S.C."/>
            <person name="Paixao R.F.C."/>
            <person name="Pedrosa F.O."/>
            <person name="Pena S.D.J."/>
            <person name="Pereira M."/>
            <person name="Pereira-Ferrari L."/>
            <person name="Piffer I."/>
            <person name="Pinto L.S."/>
            <person name="Potrich D.P."/>
            <person name="Salim A.C.M."/>
            <person name="Santos F.R."/>
            <person name="Schmitt R."/>
            <person name="Schneider M.P.C."/>
            <person name="Schrank A."/>
            <person name="Schrank I.S."/>
            <person name="Schuck A.F."/>
            <person name="Seuanez H.N."/>
            <person name="Silva D.W."/>
            <person name="Silva R."/>
            <person name="Silva S.C."/>
            <person name="Soares C.M.A."/>
            <person name="Souza K.R.L."/>
            <person name="Souza R.C."/>
            <person name="Staats C.C."/>
            <person name="Steffens M.B.R."/>
            <person name="Teixeira S.M.R."/>
            <person name="Urmenyi T.P."/>
            <person name="Vainstein M.H."/>
            <person name="Zuccherato L.W."/>
            <person name="Simpson A.J.G."/>
            <person name="Zaha A."/>
        </authorList>
    </citation>
    <scope>NUCLEOTIDE SEQUENCE [LARGE SCALE GENOMIC DNA]</scope>
    <source>
        <strain>7448</strain>
    </source>
</reference>